<evidence type="ECO:0000255" key="1">
    <source>
        <dbReference type="PROSITE-ProRule" id="PRU00395"/>
    </source>
</evidence>
<evidence type="ECO:0000269" key="2">
    <source>
    </source>
</evidence>
<evidence type="ECO:0000305" key="3"/>
<evidence type="ECO:0007829" key="4">
    <source>
        <dbReference type="PDB" id="1VB8"/>
    </source>
</evidence>
<feature type="peptide" id="PRO_0000043608" description="Root cyclotide 1">
    <location>
        <begin position="1"/>
        <end position="30"/>
    </location>
</feature>
<feature type="disulfide bond" evidence="1 2">
    <location>
        <begin position="4"/>
        <end position="21"/>
    </location>
</feature>
<feature type="disulfide bond" evidence="1 2">
    <location>
        <begin position="8"/>
        <end position="23"/>
    </location>
</feature>
<feature type="disulfide bond" evidence="1 2">
    <location>
        <begin position="13"/>
        <end position="28"/>
    </location>
</feature>
<feature type="cross-link" description="Cyclopeptide (Gly-Asn)">
    <location>
        <begin position="1"/>
        <end position="30"/>
    </location>
</feature>
<feature type="strand" evidence="4">
    <location>
        <begin position="9"/>
        <end position="11"/>
    </location>
</feature>
<feature type="strand" evidence="4">
    <location>
        <begin position="14"/>
        <end position="16"/>
    </location>
</feature>
<feature type="helix" evidence="4">
    <location>
        <begin position="17"/>
        <end position="19"/>
    </location>
</feature>
<feature type="strand" evidence="4">
    <location>
        <begin position="23"/>
        <end position="28"/>
    </location>
</feature>
<proteinExistence type="evidence at protein level"/>
<organism>
    <name type="scientific">Viola hederacea</name>
    <name type="common">Australian violet</name>
    <dbReference type="NCBI Taxonomy" id="180952"/>
    <lineage>
        <taxon>Eukaryota</taxon>
        <taxon>Viridiplantae</taxon>
        <taxon>Streptophyta</taxon>
        <taxon>Embryophyta</taxon>
        <taxon>Tracheophyta</taxon>
        <taxon>Spermatophyta</taxon>
        <taxon>Magnoliopsida</taxon>
        <taxon>eudicotyledons</taxon>
        <taxon>Gunneridae</taxon>
        <taxon>Pentapetalae</taxon>
        <taxon>rosids</taxon>
        <taxon>fabids</taxon>
        <taxon>Malpighiales</taxon>
        <taxon>Violaceae</taxon>
        <taxon>Viola</taxon>
        <taxon>Viola subgen. Viola</taxon>
        <taxon>Viola sect. Erpetion</taxon>
    </lineage>
</organism>
<keyword id="KW-0002">3D-structure</keyword>
<keyword id="KW-0903">Direct protein sequencing</keyword>
<keyword id="KW-1015">Disulfide bond</keyword>
<keyword id="KW-0960">Knottin</keyword>
<keyword id="KW-0611">Plant defense</keyword>
<accession>P83937</accession>
<comment type="function">
    <text>Probably participates in a plant defense mechanism.</text>
</comment>
<comment type="tissue specificity">
    <text evidence="2">Expressed in roots.</text>
</comment>
<comment type="domain">
    <text>The presence of a 'disulfide through disulfide knot' structurally defines this protein as a knottin.</text>
</comment>
<comment type="PTM">
    <text>This is a cyclic peptide.</text>
</comment>
<comment type="mass spectrometry"/>
<comment type="similarity">
    <text evidence="1">Belongs to the cyclotide family. Bracelet subfamily.</text>
</comment>
<comment type="caution">
    <text evidence="3">This peptide is cyclic. The start position was chosen by similarity to OAK1 (kalata-B1) for which the DNA sequence is known.</text>
</comment>
<reference key="1">
    <citation type="journal article" date="2004" name="Plant Cell">
        <title>Tissue-specific expression of head-to-tail cyclized miniproteins in Violaceae and structure determination of the root cyclotide Viola hederacea root cyclotide1.</title>
        <authorList>
            <person name="Trabi M."/>
            <person name="Craik D.J."/>
        </authorList>
    </citation>
    <scope>PROTEIN SEQUENCE</scope>
    <scope>TISSUE SPECIFICITY</scope>
    <scope>MASS SPECTROMETRY</scope>
    <scope>STRUCTURE BY NMR</scope>
    <scope>DISULFIDE BONDS</scope>
    <source>
        <tissue>Root</tissue>
    </source>
</reference>
<protein>
    <recommendedName>
        <fullName>Root cyclotide 1</fullName>
    </recommendedName>
    <alternativeName>
        <fullName>Vhr1</fullName>
    </alternativeName>
</protein>
<dbReference type="PDB" id="1VB8">
    <property type="method" value="NMR"/>
    <property type="chains" value="A=4-30"/>
</dbReference>
<dbReference type="PDBsum" id="1VB8"/>
<dbReference type="SMR" id="P83937"/>
<dbReference type="EvolutionaryTrace" id="P83937"/>
<dbReference type="GO" id="GO:0006952">
    <property type="term" value="P:defense response"/>
    <property type="evidence" value="ECO:0007669"/>
    <property type="project" value="UniProtKB-KW"/>
</dbReference>
<dbReference type="InterPro" id="IPR005535">
    <property type="entry name" value="Cyclotide"/>
</dbReference>
<dbReference type="InterPro" id="IPR012323">
    <property type="entry name" value="Cyclotide_bracelet_CS"/>
</dbReference>
<dbReference type="InterPro" id="IPR036146">
    <property type="entry name" value="Cyclotide_sf"/>
</dbReference>
<dbReference type="Pfam" id="PF03784">
    <property type="entry name" value="Cyclotide"/>
    <property type="match status" value="1"/>
</dbReference>
<dbReference type="PIRSF" id="PIRSF037891">
    <property type="entry name" value="Cycloviolacin"/>
    <property type="match status" value="1"/>
</dbReference>
<dbReference type="SUPFAM" id="SSF57038">
    <property type="entry name" value="Cyclotides"/>
    <property type="match status" value="1"/>
</dbReference>
<dbReference type="PROSITE" id="PS51052">
    <property type="entry name" value="CYCLOTIDE"/>
    <property type="match status" value="1"/>
</dbReference>
<dbReference type="PROSITE" id="PS60008">
    <property type="entry name" value="CYCLOTIDE_BRACELET"/>
    <property type="match status" value="1"/>
</dbReference>
<sequence>GIPCAESCVWIPCTVTALLGCSCSNKVCYN</sequence>
<name>VHR1_VIOHE</name>